<accession>Q64Y97</accession>
<sequence length="272" mass="31131">MKLVKPKKFLGQHFLKDLKVAQDIADTVDTFPDLPILEVGPGMGVLTQFLVKKERLVKVVEVDYESVAYLREAYPSLEDNIIEDDFLKMNLQRLFDGHPFVLTGNYPYNISSQIFFKMLDNKDLIPCCTGMIQKEVAERIAAGPGSKTYGILSVLIQAWYRVEYLFTVNEQVFNPPPKVKSAVIRMTRNETQELGCDPKLFKQIVKTTFNQRRKTLRNSIKPILGKDCPLTEDALFNKRPEQLSVQEFIHLTNQVEQALKVPIEPVSQIENP</sequence>
<proteinExistence type="inferred from homology"/>
<keyword id="KW-0963">Cytoplasm</keyword>
<keyword id="KW-0489">Methyltransferase</keyword>
<keyword id="KW-0694">RNA-binding</keyword>
<keyword id="KW-0698">rRNA processing</keyword>
<keyword id="KW-0949">S-adenosyl-L-methionine</keyword>
<keyword id="KW-0808">Transferase</keyword>
<name>RSMA_BACFR</name>
<dbReference type="EC" id="2.1.1.182" evidence="1"/>
<dbReference type="EMBL" id="AP006841">
    <property type="protein sequence ID" value="BAD47529.1"/>
    <property type="molecule type" value="Genomic_DNA"/>
</dbReference>
<dbReference type="RefSeq" id="WP_005784867.1">
    <property type="nucleotide sequence ID" value="NZ_UYXF01000001.1"/>
</dbReference>
<dbReference type="RefSeq" id="YP_098063.1">
    <property type="nucleotide sequence ID" value="NC_006347.1"/>
</dbReference>
<dbReference type="SMR" id="Q64Y97"/>
<dbReference type="STRING" id="295405.BF0778"/>
<dbReference type="GeneID" id="60370094"/>
<dbReference type="KEGG" id="bfr:BF0778"/>
<dbReference type="PATRIC" id="fig|295405.11.peg.788"/>
<dbReference type="HOGENOM" id="CLU_041220_0_1_10"/>
<dbReference type="OrthoDB" id="9814755at2"/>
<dbReference type="Proteomes" id="UP000002197">
    <property type="component" value="Chromosome"/>
</dbReference>
<dbReference type="GO" id="GO:0005829">
    <property type="term" value="C:cytosol"/>
    <property type="evidence" value="ECO:0007669"/>
    <property type="project" value="TreeGrafter"/>
</dbReference>
<dbReference type="GO" id="GO:0052908">
    <property type="term" value="F:16S rRNA (adenine(1518)-N(6)/adenine(1519)-N(6))-dimethyltransferase activity"/>
    <property type="evidence" value="ECO:0007669"/>
    <property type="project" value="UniProtKB-EC"/>
</dbReference>
<dbReference type="GO" id="GO:0003723">
    <property type="term" value="F:RNA binding"/>
    <property type="evidence" value="ECO:0007669"/>
    <property type="project" value="UniProtKB-KW"/>
</dbReference>
<dbReference type="FunFam" id="1.10.8.100:FF:000001">
    <property type="entry name" value="Ribosomal RNA small subunit methyltransferase A"/>
    <property type="match status" value="1"/>
</dbReference>
<dbReference type="FunFam" id="3.40.50.150:FF:000157">
    <property type="entry name" value="Ribosomal RNA small subunit methyltransferase A"/>
    <property type="match status" value="1"/>
</dbReference>
<dbReference type="Gene3D" id="1.10.8.100">
    <property type="entry name" value="Ribosomal RNA adenine dimethylase-like, domain 2"/>
    <property type="match status" value="1"/>
</dbReference>
<dbReference type="Gene3D" id="3.40.50.150">
    <property type="entry name" value="Vaccinia Virus protein VP39"/>
    <property type="match status" value="1"/>
</dbReference>
<dbReference type="HAMAP" id="MF_00607">
    <property type="entry name" value="16SrRNA_methyltr_A"/>
    <property type="match status" value="1"/>
</dbReference>
<dbReference type="InterPro" id="IPR001737">
    <property type="entry name" value="KsgA/Erm"/>
</dbReference>
<dbReference type="InterPro" id="IPR023165">
    <property type="entry name" value="rRNA_Ade_diMease-like_C"/>
</dbReference>
<dbReference type="InterPro" id="IPR020596">
    <property type="entry name" value="rRNA_Ade_Mease_Trfase_CS"/>
</dbReference>
<dbReference type="InterPro" id="IPR020598">
    <property type="entry name" value="rRNA_Ade_methylase_Trfase_N"/>
</dbReference>
<dbReference type="InterPro" id="IPR011530">
    <property type="entry name" value="rRNA_adenine_dimethylase"/>
</dbReference>
<dbReference type="InterPro" id="IPR029063">
    <property type="entry name" value="SAM-dependent_MTases_sf"/>
</dbReference>
<dbReference type="NCBIfam" id="TIGR00755">
    <property type="entry name" value="ksgA"/>
    <property type="match status" value="1"/>
</dbReference>
<dbReference type="PANTHER" id="PTHR11727">
    <property type="entry name" value="DIMETHYLADENOSINE TRANSFERASE"/>
    <property type="match status" value="1"/>
</dbReference>
<dbReference type="PANTHER" id="PTHR11727:SF7">
    <property type="entry name" value="DIMETHYLADENOSINE TRANSFERASE-RELATED"/>
    <property type="match status" value="1"/>
</dbReference>
<dbReference type="Pfam" id="PF00398">
    <property type="entry name" value="RrnaAD"/>
    <property type="match status" value="1"/>
</dbReference>
<dbReference type="SMART" id="SM00650">
    <property type="entry name" value="rADc"/>
    <property type="match status" value="1"/>
</dbReference>
<dbReference type="SUPFAM" id="SSF53335">
    <property type="entry name" value="S-adenosyl-L-methionine-dependent methyltransferases"/>
    <property type="match status" value="1"/>
</dbReference>
<dbReference type="PROSITE" id="PS01131">
    <property type="entry name" value="RRNA_A_DIMETH"/>
    <property type="match status" value="1"/>
</dbReference>
<dbReference type="PROSITE" id="PS51689">
    <property type="entry name" value="SAM_RNA_A_N6_MT"/>
    <property type="match status" value="1"/>
</dbReference>
<reference key="1">
    <citation type="journal article" date="2004" name="Proc. Natl. Acad. Sci. U.S.A.">
        <title>Genomic analysis of Bacteroides fragilis reveals extensive DNA inversions regulating cell surface adaptation.</title>
        <authorList>
            <person name="Kuwahara T."/>
            <person name="Yamashita A."/>
            <person name="Hirakawa H."/>
            <person name="Nakayama H."/>
            <person name="Toh H."/>
            <person name="Okada N."/>
            <person name="Kuhara S."/>
            <person name="Hattori M."/>
            <person name="Hayashi T."/>
            <person name="Ohnishi Y."/>
        </authorList>
    </citation>
    <scope>NUCLEOTIDE SEQUENCE [LARGE SCALE GENOMIC DNA]</scope>
    <source>
        <strain>YCH46</strain>
    </source>
</reference>
<gene>
    <name evidence="1" type="primary">rsmA</name>
    <name evidence="1" type="synonym">ksgA</name>
    <name type="ordered locus">BF0778</name>
</gene>
<comment type="function">
    <text evidence="1">Specifically dimethylates two adjacent adenosines (A1518 and A1519) in the loop of a conserved hairpin near the 3'-end of 16S rRNA in the 30S particle. May play a critical role in biogenesis of 30S subunits.</text>
</comment>
<comment type="catalytic activity">
    <reaction evidence="1">
        <text>adenosine(1518)/adenosine(1519) in 16S rRNA + 4 S-adenosyl-L-methionine = N(6)-dimethyladenosine(1518)/N(6)-dimethyladenosine(1519) in 16S rRNA + 4 S-adenosyl-L-homocysteine + 4 H(+)</text>
        <dbReference type="Rhea" id="RHEA:19609"/>
        <dbReference type="Rhea" id="RHEA-COMP:10232"/>
        <dbReference type="Rhea" id="RHEA-COMP:10233"/>
        <dbReference type="ChEBI" id="CHEBI:15378"/>
        <dbReference type="ChEBI" id="CHEBI:57856"/>
        <dbReference type="ChEBI" id="CHEBI:59789"/>
        <dbReference type="ChEBI" id="CHEBI:74411"/>
        <dbReference type="ChEBI" id="CHEBI:74493"/>
        <dbReference type="EC" id="2.1.1.182"/>
    </reaction>
</comment>
<comment type="subcellular location">
    <subcellularLocation>
        <location evidence="1">Cytoplasm</location>
    </subcellularLocation>
</comment>
<comment type="similarity">
    <text evidence="1">Belongs to the class I-like SAM-binding methyltransferase superfamily. rRNA adenine N(6)-methyltransferase family. RsmA subfamily.</text>
</comment>
<protein>
    <recommendedName>
        <fullName evidence="1">Ribosomal RNA small subunit methyltransferase A</fullName>
        <ecNumber evidence="1">2.1.1.182</ecNumber>
    </recommendedName>
    <alternativeName>
        <fullName evidence="1">16S rRNA (adenine(1518)-N(6)/adenine(1519)-N(6))-dimethyltransferase</fullName>
    </alternativeName>
    <alternativeName>
        <fullName evidence="1">16S rRNA dimethyladenosine transferase</fullName>
    </alternativeName>
    <alternativeName>
        <fullName evidence="1">16S rRNA dimethylase</fullName>
    </alternativeName>
    <alternativeName>
        <fullName evidence="1">S-adenosylmethionine-6-N', N'-adenosyl(rRNA) dimethyltransferase</fullName>
    </alternativeName>
</protein>
<evidence type="ECO:0000255" key="1">
    <source>
        <dbReference type="HAMAP-Rule" id="MF_00607"/>
    </source>
</evidence>
<feature type="chain" id="PRO_0000101480" description="Ribosomal RNA small subunit methyltransferase A">
    <location>
        <begin position="1"/>
        <end position="272"/>
    </location>
</feature>
<feature type="binding site" evidence="1">
    <location>
        <position position="13"/>
    </location>
    <ligand>
        <name>S-adenosyl-L-methionine</name>
        <dbReference type="ChEBI" id="CHEBI:59789"/>
    </ligand>
</feature>
<feature type="binding site" evidence="1">
    <location>
        <position position="15"/>
    </location>
    <ligand>
        <name>S-adenosyl-L-methionine</name>
        <dbReference type="ChEBI" id="CHEBI:59789"/>
    </ligand>
</feature>
<feature type="binding site" evidence="1">
    <location>
        <position position="40"/>
    </location>
    <ligand>
        <name>S-adenosyl-L-methionine</name>
        <dbReference type="ChEBI" id="CHEBI:59789"/>
    </ligand>
</feature>
<feature type="binding site" evidence="1">
    <location>
        <position position="61"/>
    </location>
    <ligand>
        <name>S-adenosyl-L-methionine</name>
        <dbReference type="ChEBI" id="CHEBI:59789"/>
    </ligand>
</feature>
<feature type="binding site" evidence="1">
    <location>
        <position position="85"/>
    </location>
    <ligand>
        <name>S-adenosyl-L-methionine</name>
        <dbReference type="ChEBI" id="CHEBI:59789"/>
    </ligand>
</feature>
<feature type="binding site" evidence="1">
    <location>
        <position position="105"/>
    </location>
    <ligand>
        <name>S-adenosyl-L-methionine</name>
        <dbReference type="ChEBI" id="CHEBI:59789"/>
    </ligand>
</feature>
<organism>
    <name type="scientific">Bacteroides fragilis (strain YCH46)</name>
    <dbReference type="NCBI Taxonomy" id="295405"/>
    <lineage>
        <taxon>Bacteria</taxon>
        <taxon>Pseudomonadati</taxon>
        <taxon>Bacteroidota</taxon>
        <taxon>Bacteroidia</taxon>
        <taxon>Bacteroidales</taxon>
        <taxon>Bacteroidaceae</taxon>
        <taxon>Bacteroides</taxon>
    </lineage>
</organism>